<name>3L27_NAJNA</name>
<dbReference type="SMR" id="C0HM09"/>
<dbReference type="Proteomes" id="UP000694559">
    <property type="component" value="Unplaced"/>
</dbReference>
<dbReference type="GO" id="GO:0005576">
    <property type="term" value="C:extracellular region"/>
    <property type="evidence" value="ECO:0007669"/>
    <property type="project" value="UniProtKB-SubCell"/>
</dbReference>
<dbReference type="GO" id="GO:0030550">
    <property type="term" value="F:acetylcholine receptor inhibitor activity"/>
    <property type="evidence" value="ECO:0007669"/>
    <property type="project" value="UniProtKB-KW"/>
</dbReference>
<dbReference type="GO" id="GO:0099106">
    <property type="term" value="F:ion channel regulator activity"/>
    <property type="evidence" value="ECO:0007669"/>
    <property type="project" value="UniProtKB-KW"/>
</dbReference>
<dbReference type="GO" id="GO:0090729">
    <property type="term" value="F:toxin activity"/>
    <property type="evidence" value="ECO:0007669"/>
    <property type="project" value="UniProtKB-KW"/>
</dbReference>
<dbReference type="CDD" id="cd00206">
    <property type="entry name" value="TFP_snake_toxin"/>
    <property type="match status" value="1"/>
</dbReference>
<dbReference type="Gene3D" id="2.10.60.10">
    <property type="entry name" value="CD59"/>
    <property type="match status" value="1"/>
</dbReference>
<dbReference type="InterPro" id="IPR003571">
    <property type="entry name" value="Snake_3FTx"/>
</dbReference>
<dbReference type="InterPro" id="IPR045860">
    <property type="entry name" value="Snake_toxin-like_sf"/>
</dbReference>
<dbReference type="InterPro" id="IPR018354">
    <property type="entry name" value="Snake_toxin_con_site"/>
</dbReference>
<dbReference type="InterPro" id="IPR054131">
    <property type="entry name" value="Toxin_cobra-type"/>
</dbReference>
<dbReference type="Pfam" id="PF21947">
    <property type="entry name" value="Toxin_cobra-type"/>
    <property type="match status" value="1"/>
</dbReference>
<dbReference type="SUPFAM" id="SSF57302">
    <property type="entry name" value="Snake toxin-like"/>
    <property type="match status" value="1"/>
</dbReference>
<dbReference type="PROSITE" id="PS00272">
    <property type="entry name" value="SNAKE_TOXIN"/>
    <property type="match status" value="1"/>
</dbReference>
<protein>
    <recommendedName>
        <fullName evidence="3">Alpha-elapitoxin-Nn3a</fullName>
    </recommendedName>
    <alternativeName>
        <fullName evidence="4">Long neurotoxin 7</fullName>
    </alternativeName>
    <alternativeName>
        <fullName evidence="3">Long-chain alpha-neurotoxin Nn3a</fullName>
    </alternativeName>
</protein>
<reference key="1">
    <citation type="journal article" date="2022" name="Front. Pharmacol.">
        <title>Isolation and Characterization of Two Postsynaptic Neurotoxins From Indian Cobra (Naja Naja) Venom.</title>
        <authorList>
            <person name="Huynh T.M."/>
            <person name="Silva A."/>
            <person name="Isbister G.K."/>
            <person name="Hodgson W.C."/>
        </authorList>
    </citation>
    <scope>PROTEIN SEQUENCE</scope>
    <scope>FUNCTION</scope>
    <scope>SUBCELLULAR LOCATION</scope>
    <scope>MASS SPECTROMETRY</scope>
</reference>
<organism>
    <name type="scientific">Naja naja</name>
    <name type="common">Indian cobra</name>
    <dbReference type="NCBI Taxonomy" id="35670"/>
    <lineage>
        <taxon>Eukaryota</taxon>
        <taxon>Metazoa</taxon>
        <taxon>Chordata</taxon>
        <taxon>Craniata</taxon>
        <taxon>Vertebrata</taxon>
        <taxon>Euteleostomi</taxon>
        <taxon>Lepidosauria</taxon>
        <taxon>Squamata</taxon>
        <taxon>Bifurcata</taxon>
        <taxon>Unidentata</taxon>
        <taxon>Episquamata</taxon>
        <taxon>Toxicofera</taxon>
        <taxon>Serpentes</taxon>
        <taxon>Colubroidea</taxon>
        <taxon>Elapidae</taxon>
        <taxon>Elapinae</taxon>
        <taxon>Naja</taxon>
    </lineage>
</organism>
<proteinExistence type="evidence at protein level"/>
<evidence type="ECO:0000250" key="1">
    <source>
        <dbReference type="UniProtKB" id="P25671"/>
    </source>
</evidence>
<evidence type="ECO:0000269" key="2">
    <source>
    </source>
</evidence>
<evidence type="ECO:0000303" key="3">
    <source>
    </source>
</evidence>
<evidence type="ECO:0000305" key="4"/>
<sequence length="71" mass="7805">IRCFITPDITSKDCPNGHVCYTKTWCDGFCSIRGERVDLDGCAATCPTVTGVDIQCCSTDNCNPFPTRKRP</sequence>
<feature type="chain" id="PRO_0000456214" description="Alpha-elapitoxin-Nn3a">
    <location>
        <begin position="1"/>
        <end position="71"/>
    </location>
</feature>
<feature type="disulfide bond" evidence="1">
    <location>
        <begin position="3"/>
        <end position="20"/>
    </location>
</feature>
<feature type="disulfide bond" evidence="1">
    <location>
        <begin position="14"/>
        <end position="42"/>
    </location>
</feature>
<feature type="disulfide bond" evidence="1">
    <location>
        <begin position="26"/>
        <end position="30"/>
    </location>
</feature>
<feature type="disulfide bond" evidence="1">
    <location>
        <begin position="46"/>
        <end position="56"/>
    </location>
</feature>
<feature type="disulfide bond" evidence="1">
    <location>
        <begin position="57"/>
        <end position="62"/>
    </location>
</feature>
<comment type="function">
    <text evidence="2">Nicotinic acetylcholine receptor antagonist (PubMed:35418867). Binds to muscle nicotinic acetylcholine receptor (nAChR) and inhibits acetylcholine from binding to the receptor, thereby impairing neuromuscular transmission (PubMed:35418867). Produces peripheral paralysis by blocking neuromuscular transmission at the postsynaptic site (PubMed:35418867). Induces concentration-dependent inhibition of indirect twitches and abolishes contractile responses of tissues to exogenous acetylcholine and carbachol, in the chick biventer cervicis nerve-muscle preparation at 100-300 nM (in vitro) (PubMed:35418867). Prior incubation of tissues with Indian polyvalent antivenom (1 ml/0.6 mg) prevents the neurotoxic effects at 100 nM (in vitro) (PubMed:35418867). Addition of Indian polyvalent antivenom (1 ml/0.6 mg) at the t90 time point partially restores the neurotoxic effects (in vitro) (PubMed:35418867). Displays a reversible antagonism of concentration-response curves to carbachol, with a pA2 of 8.17 (in vitro) (PubMed:35418867).</text>
</comment>
<comment type="subcellular location">
    <subcellularLocation>
        <location evidence="2">Secreted</location>
    </subcellularLocation>
</comment>
<comment type="tissue specificity">
    <text evidence="4">Expressed by the venom gland.</text>
</comment>
<comment type="mass spectrometry" mass="7807.5" method="MALDI" evidence="2"/>
<comment type="miscellaneous">
    <text evidence="2">Constitutes approximately 3% of the whole venom protein content.</text>
</comment>
<comment type="similarity">
    <text evidence="4">Belongs to the three-finger toxin family. Long-chain subfamily. Type II alpha-neurotoxin sub-subfamily.</text>
</comment>
<accession>C0HM09</accession>
<keyword id="KW-0008">Acetylcholine receptor inhibiting toxin</keyword>
<keyword id="KW-0903">Direct protein sequencing</keyword>
<keyword id="KW-1015">Disulfide bond</keyword>
<keyword id="KW-0872">Ion channel impairing toxin</keyword>
<keyword id="KW-0528">Neurotoxin</keyword>
<keyword id="KW-0629">Postsynaptic neurotoxin</keyword>
<keyword id="KW-1185">Reference proteome</keyword>
<keyword id="KW-0964">Secreted</keyword>
<keyword id="KW-0800">Toxin</keyword>